<accession>A6VXH5</accession>
<comment type="function">
    <text evidence="1">Catalyzes a salvage reaction resulting in the formation of AMP, that is energically less costly than de novo synthesis.</text>
</comment>
<comment type="catalytic activity">
    <reaction evidence="1">
        <text>AMP + diphosphate = 5-phospho-alpha-D-ribose 1-diphosphate + adenine</text>
        <dbReference type="Rhea" id="RHEA:16609"/>
        <dbReference type="ChEBI" id="CHEBI:16708"/>
        <dbReference type="ChEBI" id="CHEBI:33019"/>
        <dbReference type="ChEBI" id="CHEBI:58017"/>
        <dbReference type="ChEBI" id="CHEBI:456215"/>
        <dbReference type="EC" id="2.4.2.7"/>
    </reaction>
</comment>
<comment type="pathway">
    <text evidence="1">Purine metabolism; AMP biosynthesis via salvage pathway; AMP from adenine: step 1/1.</text>
</comment>
<comment type="subunit">
    <text evidence="1">Homodimer.</text>
</comment>
<comment type="subcellular location">
    <subcellularLocation>
        <location evidence="1">Cytoplasm</location>
    </subcellularLocation>
</comment>
<comment type="similarity">
    <text evidence="1">Belongs to the purine/pyrimidine phosphoribosyltransferase family.</text>
</comment>
<sequence length="180" mass="19769">MLYDDFYVKSLIQTIEDWPKQGISFRDITPIFSDPKGMRMVVDAYVHRYIATDITHIACIDARGFLIAAVLAYELQKPLILVRKKGKLPGKTISQKYALEYGEAELEIQEGAVKAGDEVLLFDDLIATGGTLLAAIELLTSQGASIKEVAAIIDLPDLGGSQKLRDSDIPVFSLCAYDGE</sequence>
<dbReference type="EC" id="2.4.2.7" evidence="1"/>
<dbReference type="EMBL" id="CP000749">
    <property type="protein sequence ID" value="ABR71154.1"/>
    <property type="molecule type" value="Genomic_DNA"/>
</dbReference>
<dbReference type="SMR" id="A6VXH5"/>
<dbReference type="STRING" id="400668.Mmwyl1_2232"/>
<dbReference type="KEGG" id="mmw:Mmwyl1_2232"/>
<dbReference type="eggNOG" id="COG0503">
    <property type="taxonomic scope" value="Bacteria"/>
</dbReference>
<dbReference type="HOGENOM" id="CLU_063339_3_3_6"/>
<dbReference type="OrthoDB" id="9803963at2"/>
<dbReference type="UniPathway" id="UPA00588">
    <property type="reaction ID" value="UER00646"/>
</dbReference>
<dbReference type="GO" id="GO:0005737">
    <property type="term" value="C:cytoplasm"/>
    <property type="evidence" value="ECO:0007669"/>
    <property type="project" value="UniProtKB-SubCell"/>
</dbReference>
<dbReference type="GO" id="GO:0002055">
    <property type="term" value="F:adenine binding"/>
    <property type="evidence" value="ECO:0007669"/>
    <property type="project" value="TreeGrafter"/>
</dbReference>
<dbReference type="GO" id="GO:0003999">
    <property type="term" value="F:adenine phosphoribosyltransferase activity"/>
    <property type="evidence" value="ECO:0007669"/>
    <property type="project" value="UniProtKB-UniRule"/>
</dbReference>
<dbReference type="GO" id="GO:0016208">
    <property type="term" value="F:AMP binding"/>
    <property type="evidence" value="ECO:0007669"/>
    <property type="project" value="TreeGrafter"/>
</dbReference>
<dbReference type="GO" id="GO:0006168">
    <property type="term" value="P:adenine salvage"/>
    <property type="evidence" value="ECO:0007669"/>
    <property type="project" value="InterPro"/>
</dbReference>
<dbReference type="GO" id="GO:0044209">
    <property type="term" value="P:AMP salvage"/>
    <property type="evidence" value="ECO:0007669"/>
    <property type="project" value="UniProtKB-UniRule"/>
</dbReference>
<dbReference type="GO" id="GO:0006166">
    <property type="term" value="P:purine ribonucleoside salvage"/>
    <property type="evidence" value="ECO:0007669"/>
    <property type="project" value="UniProtKB-KW"/>
</dbReference>
<dbReference type="CDD" id="cd06223">
    <property type="entry name" value="PRTases_typeI"/>
    <property type="match status" value="1"/>
</dbReference>
<dbReference type="FunFam" id="3.40.50.2020:FF:000021">
    <property type="entry name" value="Adenine phosphoribosyltransferase"/>
    <property type="match status" value="1"/>
</dbReference>
<dbReference type="Gene3D" id="3.40.50.2020">
    <property type="match status" value="1"/>
</dbReference>
<dbReference type="HAMAP" id="MF_00004">
    <property type="entry name" value="Aden_phosphoribosyltr"/>
    <property type="match status" value="1"/>
</dbReference>
<dbReference type="InterPro" id="IPR005764">
    <property type="entry name" value="Ade_phspho_trans"/>
</dbReference>
<dbReference type="InterPro" id="IPR000836">
    <property type="entry name" value="PRibTrfase_dom"/>
</dbReference>
<dbReference type="InterPro" id="IPR029057">
    <property type="entry name" value="PRTase-like"/>
</dbReference>
<dbReference type="InterPro" id="IPR050054">
    <property type="entry name" value="UPRTase/APRTase"/>
</dbReference>
<dbReference type="NCBIfam" id="TIGR01090">
    <property type="entry name" value="apt"/>
    <property type="match status" value="1"/>
</dbReference>
<dbReference type="NCBIfam" id="NF002634">
    <property type="entry name" value="PRK02304.1-3"/>
    <property type="match status" value="1"/>
</dbReference>
<dbReference type="NCBIfam" id="NF002636">
    <property type="entry name" value="PRK02304.1-5"/>
    <property type="match status" value="1"/>
</dbReference>
<dbReference type="PANTHER" id="PTHR32315">
    <property type="entry name" value="ADENINE PHOSPHORIBOSYLTRANSFERASE"/>
    <property type="match status" value="1"/>
</dbReference>
<dbReference type="PANTHER" id="PTHR32315:SF3">
    <property type="entry name" value="ADENINE PHOSPHORIBOSYLTRANSFERASE"/>
    <property type="match status" value="1"/>
</dbReference>
<dbReference type="Pfam" id="PF00156">
    <property type="entry name" value="Pribosyltran"/>
    <property type="match status" value="1"/>
</dbReference>
<dbReference type="SUPFAM" id="SSF53271">
    <property type="entry name" value="PRTase-like"/>
    <property type="match status" value="1"/>
</dbReference>
<dbReference type="PROSITE" id="PS00103">
    <property type="entry name" value="PUR_PYR_PR_TRANSFER"/>
    <property type="match status" value="1"/>
</dbReference>
<keyword id="KW-0963">Cytoplasm</keyword>
<keyword id="KW-0328">Glycosyltransferase</keyword>
<keyword id="KW-0660">Purine salvage</keyword>
<keyword id="KW-0808">Transferase</keyword>
<evidence type="ECO:0000255" key="1">
    <source>
        <dbReference type="HAMAP-Rule" id="MF_00004"/>
    </source>
</evidence>
<gene>
    <name evidence="1" type="primary">apt</name>
    <name type="ordered locus">Mmwyl1_2232</name>
</gene>
<proteinExistence type="inferred from homology"/>
<feature type="chain" id="PRO_1000073796" description="Adenine phosphoribosyltransferase">
    <location>
        <begin position="1"/>
        <end position="180"/>
    </location>
</feature>
<name>APT_MARMS</name>
<reference key="1">
    <citation type="submission" date="2007-06" db="EMBL/GenBank/DDBJ databases">
        <title>Complete sequence of Marinomonas sp. MWYL1.</title>
        <authorList>
            <consortium name="US DOE Joint Genome Institute"/>
            <person name="Copeland A."/>
            <person name="Lucas S."/>
            <person name="Lapidus A."/>
            <person name="Barry K."/>
            <person name="Glavina del Rio T."/>
            <person name="Dalin E."/>
            <person name="Tice H."/>
            <person name="Pitluck S."/>
            <person name="Kiss H."/>
            <person name="Brettin T."/>
            <person name="Bruce D."/>
            <person name="Detter J.C."/>
            <person name="Han C."/>
            <person name="Schmutz J."/>
            <person name="Larimer F."/>
            <person name="Land M."/>
            <person name="Hauser L."/>
            <person name="Kyrpides N."/>
            <person name="Kim E."/>
            <person name="Johnston A.W.B."/>
            <person name="Todd J.D."/>
            <person name="Rogers R."/>
            <person name="Wexler M."/>
            <person name="Bond P.L."/>
            <person name="Li Y."/>
            <person name="Richardson P."/>
        </authorList>
    </citation>
    <scope>NUCLEOTIDE SEQUENCE [LARGE SCALE GENOMIC DNA]</scope>
    <source>
        <strain>MWYL1</strain>
    </source>
</reference>
<protein>
    <recommendedName>
        <fullName evidence="1">Adenine phosphoribosyltransferase</fullName>
        <shortName evidence="1">APRT</shortName>
        <ecNumber evidence="1">2.4.2.7</ecNumber>
    </recommendedName>
</protein>
<organism>
    <name type="scientific">Marinomonas sp. (strain MWYL1)</name>
    <dbReference type="NCBI Taxonomy" id="400668"/>
    <lineage>
        <taxon>Bacteria</taxon>
        <taxon>Pseudomonadati</taxon>
        <taxon>Pseudomonadota</taxon>
        <taxon>Gammaproteobacteria</taxon>
        <taxon>Oceanospirillales</taxon>
        <taxon>Oceanospirillaceae</taxon>
        <taxon>Marinomonas</taxon>
    </lineage>
</organism>